<comment type="function">
    <text evidence="1">Catalyzes the methylthiolation of N6-(dimethylallyl)adenosine (i(6)A), leading to the formation of 2-methylthio-N6-(dimethylallyl)adenosine (ms(2)i(6)A) at position 37 in tRNAs that read codons beginning with uridine.</text>
</comment>
<comment type="catalytic activity">
    <reaction evidence="1">
        <text>N(6)-dimethylallyladenosine(37) in tRNA + (sulfur carrier)-SH + AH2 + 2 S-adenosyl-L-methionine = 2-methylsulfanyl-N(6)-dimethylallyladenosine(37) in tRNA + (sulfur carrier)-H + 5'-deoxyadenosine + L-methionine + A + S-adenosyl-L-homocysteine + 2 H(+)</text>
        <dbReference type="Rhea" id="RHEA:37067"/>
        <dbReference type="Rhea" id="RHEA-COMP:10375"/>
        <dbReference type="Rhea" id="RHEA-COMP:10376"/>
        <dbReference type="Rhea" id="RHEA-COMP:14737"/>
        <dbReference type="Rhea" id="RHEA-COMP:14739"/>
        <dbReference type="ChEBI" id="CHEBI:13193"/>
        <dbReference type="ChEBI" id="CHEBI:15378"/>
        <dbReference type="ChEBI" id="CHEBI:17319"/>
        <dbReference type="ChEBI" id="CHEBI:17499"/>
        <dbReference type="ChEBI" id="CHEBI:29917"/>
        <dbReference type="ChEBI" id="CHEBI:57844"/>
        <dbReference type="ChEBI" id="CHEBI:57856"/>
        <dbReference type="ChEBI" id="CHEBI:59789"/>
        <dbReference type="ChEBI" id="CHEBI:64428"/>
        <dbReference type="ChEBI" id="CHEBI:74415"/>
        <dbReference type="ChEBI" id="CHEBI:74417"/>
        <dbReference type="EC" id="2.8.4.3"/>
    </reaction>
</comment>
<comment type="cofactor">
    <cofactor evidence="1">
        <name>[4Fe-4S] cluster</name>
        <dbReference type="ChEBI" id="CHEBI:49883"/>
    </cofactor>
    <text evidence="1">Binds 2 [4Fe-4S] clusters. One cluster is coordinated with 3 cysteines and an exchangeable S-adenosyl-L-methionine.</text>
</comment>
<comment type="subunit">
    <text evidence="1">Monomer.</text>
</comment>
<comment type="subcellular location">
    <subcellularLocation>
        <location evidence="1">Cytoplasm</location>
    </subcellularLocation>
</comment>
<comment type="similarity">
    <text evidence="1">Belongs to the methylthiotransferase family. MiaB subfamily.</text>
</comment>
<evidence type="ECO:0000255" key="1">
    <source>
        <dbReference type="HAMAP-Rule" id="MF_01864"/>
    </source>
</evidence>
<evidence type="ECO:0000255" key="2">
    <source>
        <dbReference type="PROSITE-ProRule" id="PRU01266"/>
    </source>
</evidence>
<organism>
    <name type="scientific">Shewanella woodyi (strain ATCC 51908 / MS32)</name>
    <dbReference type="NCBI Taxonomy" id="392500"/>
    <lineage>
        <taxon>Bacteria</taxon>
        <taxon>Pseudomonadati</taxon>
        <taxon>Pseudomonadota</taxon>
        <taxon>Gammaproteobacteria</taxon>
        <taxon>Alteromonadales</taxon>
        <taxon>Shewanellaceae</taxon>
        <taxon>Shewanella</taxon>
    </lineage>
</organism>
<accession>B1KDV4</accession>
<protein>
    <recommendedName>
        <fullName evidence="1">tRNA-2-methylthio-N(6)-dimethylallyladenosine synthase</fullName>
        <ecNumber evidence="1">2.8.4.3</ecNumber>
    </recommendedName>
    <alternativeName>
        <fullName evidence="1">(Dimethylallyl)adenosine tRNA methylthiotransferase MiaB</fullName>
    </alternativeName>
    <alternativeName>
        <fullName evidence="1">tRNA-i(6)A37 methylthiotransferase</fullName>
    </alternativeName>
</protein>
<name>MIAB_SHEWM</name>
<sequence length="474" mass="53829">MSKKLHIKTWGCQMNEYDSSKMADLMDEYKGYTLTEEAEEADVLLLNTCSIREKAQEKVFHQLGRWKKLKDKNPNLIIGVGGCVASQEGKVIKDRAQCVDLIFGPQTLHRLPEMIDQIEAGGKAVIDVSFPEIEKFDRLPEPRADGPSAFVSIMEGCSKYCSFCVVPYTRGEEVSRPLDDVILEIAQLAEQGVREVNLLGQNVNAYRGATHDDEICTFAELLRYVAAIDGIDRLRFTTSHPIEFTQDIIDVYEDTPELVSFLHLPVQSGSDRILTQMKRGHMAIEYKSIIRRLRKARPDIQVSSDFIIGFPGESKQDFEDTMKLIEDVQFDHSFSFIYSARPGTPASDLPDDVTLDEKKERLAILQDRITQQAMRYSRQMLGTVQRILVEGPSVKNPMELRGRTETSRVVNFEADPKHIGSFVDVEIVDVYTNSLRGNFIRGEDEMDLRRSLRPSDILAKHKKDDELGVTQYIP</sequence>
<gene>
    <name evidence="1" type="primary">miaB</name>
    <name type="ordered locus">Swoo_3696</name>
</gene>
<reference key="1">
    <citation type="submission" date="2008-02" db="EMBL/GenBank/DDBJ databases">
        <title>Complete sequence of Shewanella woodyi ATCC 51908.</title>
        <authorList>
            <consortium name="US DOE Joint Genome Institute"/>
            <person name="Copeland A."/>
            <person name="Lucas S."/>
            <person name="Lapidus A."/>
            <person name="Glavina del Rio T."/>
            <person name="Dalin E."/>
            <person name="Tice H."/>
            <person name="Bruce D."/>
            <person name="Goodwin L."/>
            <person name="Pitluck S."/>
            <person name="Sims D."/>
            <person name="Brettin T."/>
            <person name="Detter J.C."/>
            <person name="Han C."/>
            <person name="Kuske C.R."/>
            <person name="Schmutz J."/>
            <person name="Larimer F."/>
            <person name="Land M."/>
            <person name="Hauser L."/>
            <person name="Kyrpides N."/>
            <person name="Lykidis A."/>
            <person name="Zhao J.-S."/>
            <person name="Richardson P."/>
        </authorList>
    </citation>
    <scope>NUCLEOTIDE SEQUENCE [LARGE SCALE GENOMIC DNA]</scope>
    <source>
        <strain>ATCC 51908 / MS32</strain>
    </source>
</reference>
<keyword id="KW-0004">4Fe-4S</keyword>
<keyword id="KW-0963">Cytoplasm</keyword>
<keyword id="KW-0408">Iron</keyword>
<keyword id="KW-0411">Iron-sulfur</keyword>
<keyword id="KW-0479">Metal-binding</keyword>
<keyword id="KW-1185">Reference proteome</keyword>
<keyword id="KW-0949">S-adenosyl-L-methionine</keyword>
<keyword id="KW-0808">Transferase</keyword>
<keyword id="KW-0819">tRNA processing</keyword>
<dbReference type="EC" id="2.8.4.3" evidence="1"/>
<dbReference type="EMBL" id="CP000961">
    <property type="protein sequence ID" value="ACA87956.1"/>
    <property type="molecule type" value="Genomic_DNA"/>
</dbReference>
<dbReference type="RefSeq" id="WP_012326288.1">
    <property type="nucleotide sequence ID" value="NC_010506.1"/>
</dbReference>
<dbReference type="SMR" id="B1KDV4"/>
<dbReference type="STRING" id="392500.Swoo_3696"/>
<dbReference type="KEGG" id="swd:Swoo_3696"/>
<dbReference type="eggNOG" id="COG0621">
    <property type="taxonomic scope" value="Bacteria"/>
</dbReference>
<dbReference type="HOGENOM" id="CLU_018697_2_0_6"/>
<dbReference type="Proteomes" id="UP000002168">
    <property type="component" value="Chromosome"/>
</dbReference>
<dbReference type="GO" id="GO:0005829">
    <property type="term" value="C:cytosol"/>
    <property type="evidence" value="ECO:0007669"/>
    <property type="project" value="TreeGrafter"/>
</dbReference>
<dbReference type="GO" id="GO:0051539">
    <property type="term" value="F:4 iron, 4 sulfur cluster binding"/>
    <property type="evidence" value="ECO:0007669"/>
    <property type="project" value="UniProtKB-UniRule"/>
</dbReference>
<dbReference type="GO" id="GO:0046872">
    <property type="term" value="F:metal ion binding"/>
    <property type="evidence" value="ECO:0007669"/>
    <property type="project" value="UniProtKB-KW"/>
</dbReference>
<dbReference type="GO" id="GO:0035597">
    <property type="term" value="F:N6-isopentenyladenosine methylthiotransferase activity"/>
    <property type="evidence" value="ECO:0007669"/>
    <property type="project" value="TreeGrafter"/>
</dbReference>
<dbReference type="CDD" id="cd01335">
    <property type="entry name" value="Radical_SAM"/>
    <property type="match status" value="1"/>
</dbReference>
<dbReference type="FunFam" id="3.40.50.12160:FF:000001">
    <property type="entry name" value="tRNA-2-methylthio-N(6)-dimethylallyladenosine synthase"/>
    <property type="match status" value="1"/>
</dbReference>
<dbReference type="FunFam" id="3.80.30.20:FF:000001">
    <property type="entry name" value="tRNA-2-methylthio-N(6)-dimethylallyladenosine synthase 2"/>
    <property type="match status" value="1"/>
</dbReference>
<dbReference type="Gene3D" id="3.40.50.12160">
    <property type="entry name" value="Methylthiotransferase, N-terminal domain"/>
    <property type="match status" value="1"/>
</dbReference>
<dbReference type="Gene3D" id="3.80.30.20">
    <property type="entry name" value="tm_1862 like domain"/>
    <property type="match status" value="1"/>
</dbReference>
<dbReference type="HAMAP" id="MF_01864">
    <property type="entry name" value="tRNA_metthiotr_MiaB"/>
    <property type="match status" value="1"/>
</dbReference>
<dbReference type="InterPro" id="IPR006638">
    <property type="entry name" value="Elp3/MiaA/NifB-like_rSAM"/>
</dbReference>
<dbReference type="InterPro" id="IPR005839">
    <property type="entry name" value="Methylthiotransferase"/>
</dbReference>
<dbReference type="InterPro" id="IPR020612">
    <property type="entry name" value="Methylthiotransferase_CS"/>
</dbReference>
<dbReference type="InterPro" id="IPR013848">
    <property type="entry name" value="Methylthiotransferase_N"/>
</dbReference>
<dbReference type="InterPro" id="IPR038135">
    <property type="entry name" value="Methylthiotransferase_N_sf"/>
</dbReference>
<dbReference type="InterPro" id="IPR006463">
    <property type="entry name" value="MiaB_methiolase"/>
</dbReference>
<dbReference type="InterPro" id="IPR007197">
    <property type="entry name" value="rSAM"/>
</dbReference>
<dbReference type="InterPro" id="IPR023404">
    <property type="entry name" value="rSAM_horseshoe"/>
</dbReference>
<dbReference type="InterPro" id="IPR002792">
    <property type="entry name" value="TRAM_dom"/>
</dbReference>
<dbReference type="NCBIfam" id="TIGR01574">
    <property type="entry name" value="miaB-methiolase"/>
    <property type="match status" value="1"/>
</dbReference>
<dbReference type="NCBIfam" id="TIGR00089">
    <property type="entry name" value="MiaB/RimO family radical SAM methylthiotransferase"/>
    <property type="match status" value="1"/>
</dbReference>
<dbReference type="PANTHER" id="PTHR43020">
    <property type="entry name" value="CDK5 REGULATORY SUBUNIT-ASSOCIATED PROTEIN 1"/>
    <property type="match status" value="1"/>
</dbReference>
<dbReference type="PANTHER" id="PTHR43020:SF2">
    <property type="entry name" value="MITOCHONDRIAL TRNA METHYLTHIOTRANSFERASE CDK5RAP1"/>
    <property type="match status" value="1"/>
</dbReference>
<dbReference type="Pfam" id="PF04055">
    <property type="entry name" value="Radical_SAM"/>
    <property type="match status" value="1"/>
</dbReference>
<dbReference type="Pfam" id="PF01938">
    <property type="entry name" value="TRAM"/>
    <property type="match status" value="1"/>
</dbReference>
<dbReference type="Pfam" id="PF00919">
    <property type="entry name" value="UPF0004"/>
    <property type="match status" value="1"/>
</dbReference>
<dbReference type="SFLD" id="SFLDF00273">
    <property type="entry name" value="(dimethylallyl)adenosine_tRNA"/>
    <property type="match status" value="1"/>
</dbReference>
<dbReference type="SFLD" id="SFLDG01082">
    <property type="entry name" value="B12-binding_domain_containing"/>
    <property type="match status" value="1"/>
</dbReference>
<dbReference type="SFLD" id="SFLDG01061">
    <property type="entry name" value="methylthiotransferase"/>
    <property type="match status" value="1"/>
</dbReference>
<dbReference type="SMART" id="SM00729">
    <property type="entry name" value="Elp3"/>
    <property type="match status" value="1"/>
</dbReference>
<dbReference type="SUPFAM" id="SSF102114">
    <property type="entry name" value="Radical SAM enzymes"/>
    <property type="match status" value="1"/>
</dbReference>
<dbReference type="PROSITE" id="PS51449">
    <property type="entry name" value="MTTASE_N"/>
    <property type="match status" value="1"/>
</dbReference>
<dbReference type="PROSITE" id="PS01278">
    <property type="entry name" value="MTTASE_RADICAL"/>
    <property type="match status" value="1"/>
</dbReference>
<dbReference type="PROSITE" id="PS51918">
    <property type="entry name" value="RADICAL_SAM"/>
    <property type="match status" value="1"/>
</dbReference>
<dbReference type="PROSITE" id="PS50926">
    <property type="entry name" value="TRAM"/>
    <property type="match status" value="1"/>
</dbReference>
<proteinExistence type="inferred from homology"/>
<feature type="chain" id="PRO_0000374549" description="tRNA-2-methylthio-N(6)-dimethylallyladenosine synthase">
    <location>
        <begin position="1"/>
        <end position="474"/>
    </location>
</feature>
<feature type="domain" description="MTTase N-terminal" evidence="1">
    <location>
        <begin position="3"/>
        <end position="120"/>
    </location>
</feature>
<feature type="domain" description="Radical SAM core" evidence="2">
    <location>
        <begin position="143"/>
        <end position="375"/>
    </location>
</feature>
<feature type="domain" description="TRAM" evidence="1">
    <location>
        <begin position="378"/>
        <end position="441"/>
    </location>
</feature>
<feature type="binding site" evidence="1">
    <location>
        <position position="12"/>
    </location>
    <ligand>
        <name>[4Fe-4S] cluster</name>
        <dbReference type="ChEBI" id="CHEBI:49883"/>
        <label>1</label>
    </ligand>
</feature>
<feature type="binding site" evidence="1">
    <location>
        <position position="49"/>
    </location>
    <ligand>
        <name>[4Fe-4S] cluster</name>
        <dbReference type="ChEBI" id="CHEBI:49883"/>
        <label>1</label>
    </ligand>
</feature>
<feature type="binding site" evidence="1">
    <location>
        <position position="83"/>
    </location>
    <ligand>
        <name>[4Fe-4S] cluster</name>
        <dbReference type="ChEBI" id="CHEBI:49883"/>
        <label>1</label>
    </ligand>
</feature>
<feature type="binding site" evidence="1">
    <location>
        <position position="157"/>
    </location>
    <ligand>
        <name>[4Fe-4S] cluster</name>
        <dbReference type="ChEBI" id="CHEBI:49883"/>
        <label>2</label>
        <note>4Fe-4S-S-AdoMet</note>
    </ligand>
</feature>
<feature type="binding site" evidence="1">
    <location>
        <position position="161"/>
    </location>
    <ligand>
        <name>[4Fe-4S] cluster</name>
        <dbReference type="ChEBI" id="CHEBI:49883"/>
        <label>2</label>
        <note>4Fe-4S-S-AdoMet</note>
    </ligand>
</feature>
<feature type="binding site" evidence="1">
    <location>
        <position position="164"/>
    </location>
    <ligand>
        <name>[4Fe-4S] cluster</name>
        <dbReference type="ChEBI" id="CHEBI:49883"/>
        <label>2</label>
        <note>4Fe-4S-S-AdoMet</note>
    </ligand>
</feature>